<protein>
    <recommendedName>
        <fullName evidence="1">Cytosolic Fe-S cluster assembly factor NBP35</fullName>
    </recommendedName>
    <alternativeName>
        <fullName evidence="1">Nucleotide-binding protein 35</fullName>
    </alternativeName>
</protein>
<sequence>MAPSLETPESIDDVFANPIKQKPQLVAPEPQNCVGPDSQQAGKADSCAGCPNQAICASAPKGPDPDIPVISARLENVKHKILVLSGKGGVGKSTFTSLLAHAFATNPDSNVGIMDTDICGPSIPKMMGVEGETVHVSGTGWSPIWVMDNLAVMSIQFLLPNRDDAVIWRGPKKNGLIKQFLKDVEWGDLDFLLVDTPPGTSDEHLSVNSFLKGSGIDGAVMVTTPQEVSLLDVRKEIDFCRKAGIKILGLAENMSGFVCPKCSNESQIFKASTGGGRALAEEMDIPFLGSVPLDPRIRMACDYGESYFDSFPDSPACLAFQGVVKNLAMQLGLDSQDVLPDE</sequence>
<feature type="chain" id="PRO_0000278898" description="Cytosolic Fe-S cluster assembly factor NBP35">
    <location>
        <begin position="1"/>
        <end position="342"/>
    </location>
</feature>
<feature type="binding site" evidence="1">
    <location>
        <position position="33"/>
    </location>
    <ligand>
        <name>[4Fe-4S] cluster</name>
        <dbReference type="ChEBI" id="CHEBI:49883"/>
        <label>1</label>
    </ligand>
</feature>
<feature type="binding site" evidence="1">
    <location>
        <position position="47"/>
    </location>
    <ligand>
        <name>[4Fe-4S] cluster</name>
        <dbReference type="ChEBI" id="CHEBI:49883"/>
        <label>1</label>
    </ligand>
</feature>
<feature type="binding site" evidence="1">
    <location>
        <position position="50"/>
    </location>
    <ligand>
        <name>[4Fe-4S] cluster</name>
        <dbReference type="ChEBI" id="CHEBI:49883"/>
        <label>1</label>
    </ligand>
</feature>
<feature type="binding site" evidence="1">
    <location>
        <position position="56"/>
    </location>
    <ligand>
        <name>[4Fe-4S] cluster</name>
        <dbReference type="ChEBI" id="CHEBI:49883"/>
        <label>1</label>
    </ligand>
</feature>
<feature type="binding site" evidence="1">
    <location>
        <begin position="86"/>
        <end position="93"/>
    </location>
    <ligand>
        <name>ATP</name>
        <dbReference type="ChEBI" id="CHEBI:30616"/>
    </ligand>
</feature>
<feature type="binding site" evidence="1">
    <location>
        <position position="259"/>
    </location>
    <ligand>
        <name>[4Fe-4S] cluster</name>
        <dbReference type="ChEBI" id="CHEBI:49883"/>
        <label>2</label>
        <note>ligand shared with heterodimeric partner</note>
    </ligand>
</feature>
<feature type="binding site" evidence="1">
    <location>
        <position position="262"/>
    </location>
    <ligand>
        <name>[4Fe-4S] cluster</name>
        <dbReference type="ChEBI" id="CHEBI:49883"/>
        <label>2</label>
        <note>ligand shared with heterodimeric partner</note>
    </ligand>
</feature>
<evidence type="ECO:0000255" key="1">
    <source>
        <dbReference type="HAMAP-Rule" id="MF_03038"/>
    </source>
</evidence>
<comment type="function">
    <text evidence="1">Component of the cytosolic iron-sulfur (Fe/S) protein assembly (CIA) machinery. Required for maturation of extramitochondrial Fe-S proteins. The NBP35-CFD1 heterotetramer forms a Fe-S scaffold complex, mediating the de novo assembly of an Fe-S cluster and its transfer to target apoproteins.</text>
</comment>
<comment type="cofactor">
    <cofactor evidence="1">
        <name>[4Fe-4S] cluster</name>
        <dbReference type="ChEBI" id="CHEBI:49883"/>
    </cofactor>
    <text evidence="1">Binds 4 [4Fe-4S] clusters per heterotetramer. Contains two stable clusters in the N-termini of NBP35 and two labile, bridging clusters between subunits of the NBP35-CFD1 heterotetramer.</text>
</comment>
<comment type="subunit">
    <text evidence="1">Heterotetramer of 2 NBP35 and 2 CFD1 chains.</text>
</comment>
<comment type="subcellular location">
    <subcellularLocation>
        <location evidence="1">Cytoplasm</location>
    </subcellularLocation>
</comment>
<comment type="similarity">
    <text evidence="1">Belongs to the Mrp/NBP35 ATP-binding proteins family. NUBP1/NBP35 subfamily.</text>
</comment>
<dbReference type="EMBL" id="DS231668">
    <property type="protein sequence ID" value="ESU16396.1"/>
    <property type="molecule type" value="Genomic_DNA"/>
</dbReference>
<dbReference type="EMBL" id="HG970335">
    <property type="protein sequence ID" value="CEF85739.1"/>
    <property type="molecule type" value="Genomic_DNA"/>
</dbReference>
<dbReference type="RefSeq" id="XP_011327920.1">
    <property type="nucleotide sequence ID" value="XM_011329618.1"/>
</dbReference>
<dbReference type="SMR" id="Q4HZ34"/>
<dbReference type="FunCoup" id="Q4HZ34">
    <property type="interactions" value="602"/>
</dbReference>
<dbReference type="STRING" id="229533.Q4HZ34"/>
<dbReference type="GeneID" id="23556708"/>
<dbReference type="KEGG" id="fgr:FGSG_09774"/>
<dbReference type="VEuPathDB" id="FungiDB:FGRAMPH1_01G26309"/>
<dbReference type="eggNOG" id="KOG3022">
    <property type="taxonomic scope" value="Eukaryota"/>
</dbReference>
<dbReference type="HOGENOM" id="CLU_024839_0_1_1"/>
<dbReference type="InParanoid" id="Q4HZ34"/>
<dbReference type="OrthoDB" id="8276at110618"/>
<dbReference type="Proteomes" id="UP000070720">
    <property type="component" value="Chromosome 4"/>
</dbReference>
<dbReference type="GO" id="GO:0005829">
    <property type="term" value="C:cytosol"/>
    <property type="evidence" value="ECO:0007669"/>
    <property type="project" value="TreeGrafter"/>
</dbReference>
<dbReference type="GO" id="GO:0051539">
    <property type="term" value="F:4 iron, 4 sulfur cluster binding"/>
    <property type="evidence" value="ECO:0007669"/>
    <property type="project" value="UniProtKB-UniRule"/>
</dbReference>
<dbReference type="GO" id="GO:0005524">
    <property type="term" value="F:ATP binding"/>
    <property type="evidence" value="ECO:0007669"/>
    <property type="project" value="UniProtKB-KW"/>
</dbReference>
<dbReference type="GO" id="GO:0140663">
    <property type="term" value="F:ATP-dependent FeS chaperone activity"/>
    <property type="evidence" value="ECO:0007669"/>
    <property type="project" value="InterPro"/>
</dbReference>
<dbReference type="GO" id="GO:0046872">
    <property type="term" value="F:metal ion binding"/>
    <property type="evidence" value="ECO:0007669"/>
    <property type="project" value="UniProtKB-KW"/>
</dbReference>
<dbReference type="GO" id="GO:0016226">
    <property type="term" value="P:iron-sulfur cluster assembly"/>
    <property type="evidence" value="ECO:0007669"/>
    <property type="project" value="UniProtKB-UniRule"/>
</dbReference>
<dbReference type="CDD" id="cd02037">
    <property type="entry name" value="Mrp_NBP35"/>
    <property type="match status" value="1"/>
</dbReference>
<dbReference type="FunFam" id="3.40.50.300:FF:000427">
    <property type="entry name" value="Cytosolic Fe-S cluster assembly factor NUBP1"/>
    <property type="match status" value="1"/>
</dbReference>
<dbReference type="Gene3D" id="3.40.50.300">
    <property type="entry name" value="P-loop containing nucleotide triphosphate hydrolases"/>
    <property type="match status" value="1"/>
</dbReference>
<dbReference type="HAMAP" id="MF_02040">
    <property type="entry name" value="Mrp_NBP35"/>
    <property type="match status" value="1"/>
</dbReference>
<dbReference type="HAMAP" id="MF_03038">
    <property type="entry name" value="NUBP1"/>
    <property type="match status" value="1"/>
</dbReference>
<dbReference type="InterPro" id="IPR000808">
    <property type="entry name" value="Mrp-like_CS"/>
</dbReference>
<dbReference type="InterPro" id="IPR019591">
    <property type="entry name" value="Mrp/NBP35_ATP-bd"/>
</dbReference>
<dbReference type="InterPro" id="IPR028601">
    <property type="entry name" value="NUBP1/Nbp35"/>
</dbReference>
<dbReference type="InterPro" id="IPR027417">
    <property type="entry name" value="P-loop_NTPase"/>
</dbReference>
<dbReference type="InterPro" id="IPR033756">
    <property type="entry name" value="YlxH/NBP35"/>
</dbReference>
<dbReference type="PANTHER" id="PTHR23264:SF35">
    <property type="entry name" value="CYTOSOLIC FE-S CLUSTER ASSEMBLY FACTOR NUBP1"/>
    <property type="match status" value="1"/>
</dbReference>
<dbReference type="PANTHER" id="PTHR23264">
    <property type="entry name" value="NUCLEOTIDE-BINDING PROTEIN NBP35 YEAST -RELATED"/>
    <property type="match status" value="1"/>
</dbReference>
<dbReference type="Pfam" id="PF10609">
    <property type="entry name" value="ParA"/>
    <property type="match status" value="1"/>
</dbReference>
<dbReference type="SUPFAM" id="SSF52540">
    <property type="entry name" value="P-loop containing nucleoside triphosphate hydrolases"/>
    <property type="match status" value="1"/>
</dbReference>
<dbReference type="PROSITE" id="PS01215">
    <property type="entry name" value="MRP"/>
    <property type="match status" value="1"/>
</dbReference>
<organism>
    <name type="scientific">Gibberella zeae (strain ATCC MYA-4620 / CBS 123657 / FGSC 9075 / NRRL 31084 / PH-1)</name>
    <name type="common">Wheat head blight fungus</name>
    <name type="synonym">Fusarium graminearum</name>
    <dbReference type="NCBI Taxonomy" id="229533"/>
    <lineage>
        <taxon>Eukaryota</taxon>
        <taxon>Fungi</taxon>
        <taxon>Dikarya</taxon>
        <taxon>Ascomycota</taxon>
        <taxon>Pezizomycotina</taxon>
        <taxon>Sordariomycetes</taxon>
        <taxon>Hypocreomycetidae</taxon>
        <taxon>Hypocreales</taxon>
        <taxon>Nectriaceae</taxon>
        <taxon>Fusarium</taxon>
    </lineage>
</organism>
<reference key="1">
    <citation type="journal article" date="2007" name="Science">
        <title>The Fusarium graminearum genome reveals a link between localized polymorphism and pathogen specialization.</title>
        <authorList>
            <person name="Cuomo C.A."/>
            <person name="Gueldener U."/>
            <person name="Xu J.-R."/>
            <person name="Trail F."/>
            <person name="Turgeon B.G."/>
            <person name="Di Pietro A."/>
            <person name="Walton J.D."/>
            <person name="Ma L.-J."/>
            <person name="Baker S.E."/>
            <person name="Rep M."/>
            <person name="Adam G."/>
            <person name="Antoniw J."/>
            <person name="Baldwin T."/>
            <person name="Calvo S.E."/>
            <person name="Chang Y.-L."/>
            <person name="DeCaprio D."/>
            <person name="Gale L.R."/>
            <person name="Gnerre S."/>
            <person name="Goswami R.S."/>
            <person name="Hammond-Kosack K."/>
            <person name="Harris L.J."/>
            <person name="Hilburn K."/>
            <person name="Kennell J.C."/>
            <person name="Kroken S."/>
            <person name="Magnuson J.K."/>
            <person name="Mannhaupt G."/>
            <person name="Mauceli E.W."/>
            <person name="Mewes H.-W."/>
            <person name="Mitterbauer R."/>
            <person name="Muehlbauer G."/>
            <person name="Muensterkoetter M."/>
            <person name="Nelson D."/>
            <person name="O'Donnell K."/>
            <person name="Ouellet T."/>
            <person name="Qi W."/>
            <person name="Quesneville H."/>
            <person name="Roncero M.I.G."/>
            <person name="Seong K.-Y."/>
            <person name="Tetko I.V."/>
            <person name="Urban M."/>
            <person name="Waalwijk C."/>
            <person name="Ward T.J."/>
            <person name="Yao J."/>
            <person name="Birren B.W."/>
            <person name="Kistler H.C."/>
        </authorList>
    </citation>
    <scope>NUCLEOTIDE SEQUENCE [LARGE SCALE GENOMIC DNA]</scope>
    <source>
        <strain>ATCC MYA-4620 / CBS 123657 / FGSC 9075 / NRRL 31084 / PH-1</strain>
    </source>
</reference>
<reference key="2">
    <citation type="journal article" date="2010" name="Nature">
        <title>Comparative genomics reveals mobile pathogenicity chromosomes in Fusarium.</title>
        <authorList>
            <person name="Ma L.-J."/>
            <person name="van der Does H.C."/>
            <person name="Borkovich K.A."/>
            <person name="Coleman J.J."/>
            <person name="Daboussi M.-J."/>
            <person name="Di Pietro A."/>
            <person name="Dufresne M."/>
            <person name="Freitag M."/>
            <person name="Grabherr M."/>
            <person name="Henrissat B."/>
            <person name="Houterman P.M."/>
            <person name="Kang S."/>
            <person name="Shim W.-B."/>
            <person name="Woloshuk C."/>
            <person name="Xie X."/>
            <person name="Xu J.-R."/>
            <person name="Antoniw J."/>
            <person name="Baker S.E."/>
            <person name="Bluhm B.H."/>
            <person name="Breakspear A."/>
            <person name="Brown D.W."/>
            <person name="Butchko R.A.E."/>
            <person name="Chapman S."/>
            <person name="Coulson R."/>
            <person name="Coutinho P.M."/>
            <person name="Danchin E.G.J."/>
            <person name="Diener A."/>
            <person name="Gale L.R."/>
            <person name="Gardiner D.M."/>
            <person name="Goff S."/>
            <person name="Hammond-Kosack K.E."/>
            <person name="Hilburn K."/>
            <person name="Hua-Van A."/>
            <person name="Jonkers W."/>
            <person name="Kazan K."/>
            <person name="Kodira C.D."/>
            <person name="Koehrsen M."/>
            <person name="Kumar L."/>
            <person name="Lee Y.-H."/>
            <person name="Li L."/>
            <person name="Manners J.M."/>
            <person name="Miranda-Saavedra D."/>
            <person name="Mukherjee M."/>
            <person name="Park G."/>
            <person name="Park J."/>
            <person name="Park S.-Y."/>
            <person name="Proctor R.H."/>
            <person name="Regev A."/>
            <person name="Ruiz-Roldan M.C."/>
            <person name="Sain D."/>
            <person name="Sakthikumar S."/>
            <person name="Sykes S."/>
            <person name="Schwartz D.C."/>
            <person name="Turgeon B.G."/>
            <person name="Wapinski I."/>
            <person name="Yoder O."/>
            <person name="Young S."/>
            <person name="Zeng Q."/>
            <person name="Zhou S."/>
            <person name="Galagan J."/>
            <person name="Cuomo C.A."/>
            <person name="Kistler H.C."/>
            <person name="Rep M."/>
        </authorList>
    </citation>
    <scope>GENOME REANNOTATION</scope>
    <source>
        <strain>ATCC MYA-4620 / CBS 123657 / FGSC 9075 / NRRL 31084 / PH-1</strain>
    </source>
</reference>
<reference key="3">
    <citation type="journal article" date="2015" name="BMC Genomics">
        <title>The completed genome sequence of the pathogenic ascomycete fungus Fusarium graminearum.</title>
        <authorList>
            <person name="King R."/>
            <person name="Urban M."/>
            <person name="Hammond-Kosack M.C.U."/>
            <person name="Hassani-Pak K."/>
            <person name="Hammond-Kosack K.E."/>
        </authorList>
    </citation>
    <scope>NUCLEOTIDE SEQUENCE [LARGE SCALE GENOMIC DNA]</scope>
    <source>
        <strain>ATCC MYA-4620 / CBS 123657 / FGSC 9075 / NRRL 31084 / PH-1</strain>
    </source>
</reference>
<name>NBP35_GIBZE</name>
<gene>
    <name evidence="1" type="primary">NBP35</name>
    <name type="ORF">FGRRES_09774</name>
    <name type="ORF">FGSG_09774</name>
</gene>
<keyword id="KW-0004">4Fe-4S</keyword>
<keyword id="KW-0067">ATP-binding</keyword>
<keyword id="KW-0963">Cytoplasm</keyword>
<keyword id="KW-0408">Iron</keyword>
<keyword id="KW-0411">Iron-sulfur</keyword>
<keyword id="KW-0479">Metal-binding</keyword>
<keyword id="KW-0547">Nucleotide-binding</keyword>
<keyword id="KW-1185">Reference proteome</keyword>
<accession>Q4HZ34</accession>
<accession>A0A0E0SH26</accession>
<accession>V6RPK7</accession>
<proteinExistence type="inferred from homology"/>